<proteinExistence type="evidence at transcript level"/>
<organism>
    <name type="scientific">Oryza sativa subsp. japonica</name>
    <name type="common">Rice</name>
    <dbReference type="NCBI Taxonomy" id="39947"/>
    <lineage>
        <taxon>Eukaryota</taxon>
        <taxon>Viridiplantae</taxon>
        <taxon>Streptophyta</taxon>
        <taxon>Embryophyta</taxon>
        <taxon>Tracheophyta</taxon>
        <taxon>Spermatophyta</taxon>
        <taxon>Magnoliopsida</taxon>
        <taxon>Liliopsida</taxon>
        <taxon>Poales</taxon>
        <taxon>Poaceae</taxon>
        <taxon>BOP clade</taxon>
        <taxon>Oryzoideae</taxon>
        <taxon>Oryzeae</taxon>
        <taxon>Oryzinae</taxon>
        <taxon>Oryza</taxon>
        <taxon>Oryza sativa</taxon>
    </lineage>
</organism>
<reference key="1">
    <citation type="journal article" date="1995" name="Proc. Natl. Acad. Sci. U.S.A.">
        <title>Molecular cloning and sequence analysis of expansins - a highly conserved, multigene family of proteins that mediate cell wall extension in plants.</title>
        <authorList>
            <person name="Shcherban T.Y."/>
            <person name="Shi J."/>
            <person name="Durachko D.M."/>
            <person name="Guiltinan M.J."/>
            <person name="McQueen-Mason S.J."/>
            <person name="Shieh M."/>
            <person name="Cosgrove D.J."/>
        </authorList>
    </citation>
    <scope>NUCLEOTIDE SEQUENCE [MRNA]</scope>
    <source>
        <strain>cv. Nipponbare</strain>
    </source>
</reference>
<reference key="2">
    <citation type="journal article" date="2002" name="Plant Physiol.">
        <title>Expression of alpha-expansin and expansin-like genes in deepwater rice.</title>
        <authorList>
            <person name="Lee Y."/>
            <person name="Kende H."/>
        </authorList>
    </citation>
    <scope>NUCLEOTIDE SEQUENCE [GENOMIC DNA]</scope>
    <scope>DEVELOPMENTAL STAGE</scope>
    <scope>INDUCTION</scope>
</reference>
<reference key="3">
    <citation type="journal article" date="2002" name="Nature">
        <title>The genome sequence and structure of rice chromosome 1.</title>
        <authorList>
            <person name="Sasaki T."/>
            <person name="Matsumoto T."/>
            <person name="Yamamoto K."/>
            <person name="Sakata K."/>
            <person name="Baba T."/>
            <person name="Katayose Y."/>
            <person name="Wu J."/>
            <person name="Niimura Y."/>
            <person name="Cheng Z."/>
            <person name="Nagamura Y."/>
            <person name="Antonio B.A."/>
            <person name="Kanamori H."/>
            <person name="Hosokawa S."/>
            <person name="Masukawa M."/>
            <person name="Arikawa K."/>
            <person name="Chiden Y."/>
            <person name="Hayashi M."/>
            <person name="Okamoto M."/>
            <person name="Ando T."/>
            <person name="Aoki H."/>
            <person name="Arita K."/>
            <person name="Hamada M."/>
            <person name="Harada C."/>
            <person name="Hijishita S."/>
            <person name="Honda M."/>
            <person name="Ichikawa Y."/>
            <person name="Idonuma A."/>
            <person name="Iijima M."/>
            <person name="Ikeda M."/>
            <person name="Ikeno M."/>
            <person name="Ito S."/>
            <person name="Ito T."/>
            <person name="Ito Y."/>
            <person name="Ito Y."/>
            <person name="Iwabuchi A."/>
            <person name="Kamiya K."/>
            <person name="Karasawa W."/>
            <person name="Katagiri S."/>
            <person name="Kikuta A."/>
            <person name="Kobayashi N."/>
            <person name="Kono I."/>
            <person name="Machita K."/>
            <person name="Maehara T."/>
            <person name="Mizuno H."/>
            <person name="Mizubayashi T."/>
            <person name="Mukai Y."/>
            <person name="Nagasaki H."/>
            <person name="Nakashima M."/>
            <person name="Nakama Y."/>
            <person name="Nakamichi Y."/>
            <person name="Nakamura M."/>
            <person name="Namiki N."/>
            <person name="Negishi M."/>
            <person name="Ohta I."/>
            <person name="Ono N."/>
            <person name="Saji S."/>
            <person name="Sakai K."/>
            <person name="Shibata M."/>
            <person name="Shimokawa T."/>
            <person name="Shomura A."/>
            <person name="Song J."/>
            <person name="Takazaki Y."/>
            <person name="Terasawa K."/>
            <person name="Tsuji K."/>
            <person name="Waki K."/>
            <person name="Yamagata H."/>
            <person name="Yamane H."/>
            <person name="Yoshiki S."/>
            <person name="Yoshihara R."/>
            <person name="Yukawa K."/>
            <person name="Zhong H."/>
            <person name="Iwama H."/>
            <person name="Endo T."/>
            <person name="Ito H."/>
            <person name="Hahn J.H."/>
            <person name="Kim H.-I."/>
            <person name="Eun M.-Y."/>
            <person name="Yano M."/>
            <person name="Jiang J."/>
            <person name="Gojobori T."/>
        </authorList>
    </citation>
    <scope>NUCLEOTIDE SEQUENCE [LARGE SCALE GENOMIC DNA]</scope>
    <source>
        <strain>cv. Nipponbare</strain>
    </source>
</reference>
<reference key="4">
    <citation type="journal article" date="2005" name="Nature">
        <title>The map-based sequence of the rice genome.</title>
        <authorList>
            <consortium name="International rice genome sequencing project (IRGSP)"/>
        </authorList>
    </citation>
    <scope>NUCLEOTIDE SEQUENCE [LARGE SCALE GENOMIC DNA]</scope>
    <source>
        <strain>cv. Nipponbare</strain>
    </source>
</reference>
<reference key="5">
    <citation type="journal article" date="2008" name="Nucleic Acids Res.">
        <title>The rice annotation project database (RAP-DB): 2008 update.</title>
        <authorList>
            <consortium name="The rice annotation project (RAP)"/>
        </authorList>
    </citation>
    <scope>GENOME REANNOTATION</scope>
    <source>
        <strain>cv. Nipponbare</strain>
    </source>
</reference>
<reference key="6">
    <citation type="journal article" date="2013" name="Rice">
        <title>Improvement of the Oryza sativa Nipponbare reference genome using next generation sequence and optical map data.</title>
        <authorList>
            <person name="Kawahara Y."/>
            <person name="de la Bastide M."/>
            <person name="Hamilton J.P."/>
            <person name="Kanamori H."/>
            <person name="McCombie W.R."/>
            <person name="Ouyang S."/>
            <person name="Schwartz D.C."/>
            <person name="Tanaka T."/>
            <person name="Wu J."/>
            <person name="Zhou S."/>
            <person name="Childs K.L."/>
            <person name="Davidson R.M."/>
            <person name="Lin H."/>
            <person name="Quesada-Ocampo L."/>
            <person name="Vaillancourt B."/>
            <person name="Sakai H."/>
            <person name="Lee S.S."/>
            <person name="Kim J."/>
            <person name="Numa H."/>
            <person name="Itoh T."/>
            <person name="Buell C.R."/>
            <person name="Matsumoto T."/>
        </authorList>
    </citation>
    <scope>GENOME REANNOTATION</scope>
    <source>
        <strain>cv. Nipponbare</strain>
    </source>
</reference>
<reference key="7">
    <citation type="journal article" date="2005" name="PLoS Biol.">
        <title>The genomes of Oryza sativa: a history of duplications.</title>
        <authorList>
            <person name="Yu J."/>
            <person name="Wang J."/>
            <person name="Lin W."/>
            <person name="Li S."/>
            <person name="Li H."/>
            <person name="Zhou J."/>
            <person name="Ni P."/>
            <person name="Dong W."/>
            <person name="Hu S."/>
            <person name="Zeng C."/>
            <person name="Zhang J."/>
            <person name="Zhang Y."/>
            <person name="Li R."/>
            <person name="Xu Z."/>
            <person name="Li S."/>
            <person name="Li X."/>
            <person name="Zheng H."/>
            <person name="Cong L."/>
            <person name="Lin L."/>
            <person name="Yin J."/>
            <person name="Geng J."/>
            <person name="Li G."/>
            <person name="Shi J."/>
            <person name="Liu J."/>
            <person name="Lv H."/>
            <person name="Li J."/>
            <person name="Wang J."/>
            <person name="Deng Y."/>
            <person name="Ran L."/>
            <person name="Shi X."/>
            <person name="Wang X."/>
            <person name="Wu Q."/>
            <person name="Li C."/>
            <person name="Ren X."/>
            <person name="Wang J."/>
            <person name="Wang X."/>
            <person name="Li D."/>
            <person name="Liu D."/>
            <person name="Zhang X."/>
            <person name="Ji Z."/>
            <person name="Zhao W."/>
            <person name="Sun Y."/>
            <person name="Zhang Z."/>
            <person name="Bao J."/>
            <person name="Han Y."/>
            <person name="Dong L."/>
            <person name="Ji J."/>
            <person name="Chen P."/>
            <person name="Wu S."/>
            <person name="Liu J."/>
            <person name="Xiao Y."/>
            <person name="Bu D."/>
            <person name="Tan J."/>
            <person name="Yang L."/>
            <person name="Ye C."/>
            <person name="Zhang J."/>
            <person name="Xu J."/>
            <person name="Zhou Y."/>
            <person name="Yu Y."/>
            <person name="Zhang B."/>
            <person name="Zhuang S."/>
            <person name="Wei H."/>
            <person name="Liu B."/>
            <person name="Lei M."/>
            <person name="Yu H."/>
            <person name="Li Y."/>
            <person name="Xu H."/>
            <person name="Wei S."/>
            <person name="He X."/>
            <person name="Fang L."/>
            <person name="Zhang Z."/>
            <person name="Zhang Y."/>
            <person name="Huang X."/>
            <person name="Su Z."/>
            <person name="Tong W."/>
            <person name="Li J."/>
            <person name="Tong Z."/>
            <person name="Li S."/>
            <person name="Ye J."/>
            <person name="Wang L."/>
            <person name="Fang L."/>
            <person name="Lei T."/>
            <person name="Chen C.-S."/>
            <person name="Chen H.-C."/>
            <person name="Xu Z."/>
            <person name="Li H."/>
            <person name="Huang H."/>
            <person name="Zhang F."/>
            <person name="Xu H."/>
            <person name="Li N."/>
            <person name="Zhao C."/>
            <person name="Li S."/>
            <person name="Dong L."/>
            <person name="Huang Y."/>
            <person name="Li L."/>
            <person name="Xi Y."/>
            <person name="Qi Q."/>
            <person name="Li W."/>
            <person name="Zhang B."/>
            <person name="Hu W."/>
            <person name="Zhang Y."/>
            <person name="Tian X."/>
            <person name="Jiao Y."/>
            <person name="Liang X."/>
            <person name="Jin J."/>
            <person name="Gao L."/>
            <person name="Zheng W."/>
            <person name="Hao B."/>
            <person name="Liu S.-M."/>
            <person name="Wang W."/>
            <person name="Yuan L."/>
            <person name="Cao M."/>
            <person name="McDermott J."/>
            <person name="Samudrala R."/>
            <person name="Wang J."/>
            <person name="Wong G.K.-S."/>
            <person name="Yang H."/>
        </authorList>
    </citation>
    <scope>NUCLEOTIDE SEQUENCE [LARGE SCALE GENOMIC DNA]</scope>
    <source>
        <strain>cv. Nipponbare</strain>
    </source>
</reference>
<reference key="8">
    <citation type="journal article" date="1997" name="Plant Cell">
        <title>Expression of expansin genes is correlated with growth in deepwater rice.</title>
        <authorList>
            <person name="Cho H.-T."/>
            <person name="Kende H."/>
        </authorList>
    </citation>
    <scope>TISSUE SPECIFICITY</scope>
    <scope>DEVELOPMENTAL STAGE</scope>
    <scope>INDUCTION</scope>
    <source>
        <strain>cv. Nipponbare</strain>
        <tissue>Shoot</tissue>
    </source>
</reference>
<reference key="9">
    <citation type="journal article" date="1998" name="Plant J.">
        <title>Tissue localization of expansins in deepwater rice.</title>
        <authorList>
            <person name="Cho H.-T."/>
            <person name="Kende H."/>
        </authorList>
    </citation>
    <scope>TISSUE SPECIFICITY</scope>
</reference>
<reference key="10">
    <citation type="journal article" date="2000" name="Planta">
        <title>Expression of alpha-expansin genes in young seedlings of rice (Oryza sativa L.).</title>
        <authorList>
            <person name="Huang J."/>
            <person name="Takano T."/>
            <person name="Akita S."/>
        </authorList>
    </citation>
    <scope>DEVELOPMENTAL STAGE</scope>
    <scope>INDUCTION</scope>
</reference>
<reference key="11">
    <citation type="journal article" date="2004" name="Plant Mol. Biol.">
        <title>Nomenclature for members of the expansin superfamily of genes and proteins.</title>
        <authorList>
            <person name="Kende H."/>
            <person name="Bradford K.J."/>
            <person name="Brummell D.A."/>
            <person name="Cho H.-T."/>
            <person name="Cosgrove D.J."/>
            <person name="Fleming A.J."/>
            <person name="Gehring C."/>
            <person name="Lee Y."/>
            <person name="McQueen-Mason S.J."/>
            <person name="Rose J.K.C."/>
            <person name="Voesenek L.A.C."/>
        </authorList>
    </citation>
    <scope>NOMENCLATURE</scope>
</reference>
<reference key="12">
    <citation type="journal article" date="2005" name="Mol. Cells">
        <title>Characterization and transcriptional expression of the alpha-expansin gene family in rice.</title>
        <authorList>
            <person name="Shin J.-H."/>
            <person name="Jeong D.-H."/>
            <person name="Park M.C."/>
            <person name="An G."/>
        </authorList>
    </citation>
    <scope>TISSUE SPECIFICITY</scope>
</reference>
<feature type="signal peptide" evidence="2">
    <location>
        <begin position="1"/>
        <end position="24"/>
    </location>
</feature>
<feature type="chain" id="PRO_0000251981" description="Expansin-A2">
    <location>
        <begin position="25"/>
        <end position="251"/>
    </location>
</feature>
<feature type="domain" description="Expansin-like EG45" evidence="4">
    <location>
        <begin position="47"/>
        <end position="159"/>
    </location>
</feature>
<feature type="domain" description="Expansin-like CBD" evidence="3">
    <location>
        <begin position="169"/>
        <end position="248"/>
    </location>
</feature>
<feature type="disulfide bond" evidence="4">
    <location>
        <begin position="50"/>
        <end position="78"/>
    </location>
</feature>
<feature type="disulfide bond" evidence="4">
    <location>
        <begin position="81"/>
        <end position="154"/>
    </location>
</feature>
<feature type="disulfide bond" evidence="4">
    <location>
        <begin position="86"/>
        <end position="93"/>
    </location>
</feature>
<feature type="sequence conflict" description="In Ref. 1; AAB38074." evidence="10" ref="1">
    <original>G</original>
    <variation>R</variation>
    <location>
        <position position="79"/>
    </location>
</feature>
<evidence type="ECO:0000250" key="1"/>
<evidence type="ECO:0000255" key="2"/>
<evidence type="ECO:0000255" key="3">
    <source>
        <dbReference type="PROSITE-ProRule" id="PRU00078"/>
    </source>
</evidence>
<evidence type="ECO:0000255" key="4">
    <source>
        <dbReference type="PROSITE-ProRule" id="PRU00079"/>
    </source>
</evidence>
<evidence type="ECO:0000269" key="5">
    <source>
    </source>
</evidence>
<evidence type="ECO:0000269" key="6">
    <source>
    </source>
</evidence>
<evidence type="ECO:0000269" key="7">
    <source>
    </source>
</evidence>
<evidence type="ECO:0000269" key="8">
    <source>
    </source>
</evidence>
<evidence type="ECO:0000269" key="9">
    <source>
    </source>
</evidence>
<evidence type="ECO:0000305" key="10"/>
<evidence type="ECO:0000312" key="11">
    <source>
        <dbReference type="EMBL" id="EAZ13980.1"/>
    </source>
</evidence>
<dbReference type="EMBL" id="U30477">
    <property type="protein sequence ID" value="AAB38074.1"/>
    <property type="molecule type" value="mRNA"/>
</dbReference>
<dbReference type="EMBL" id="AF394544">
    <property type="protein sequence ID" value="AAL24480.1"/>
    <property type="molecule type" value="Genomic_DNA"/>
</dbReference>
<dbReference type="EMBL" id="AP003230">
    <property type="protein sequence ID" value="BAB93180.1"/>
    <property type="molecule type" value="Genomic_DNA"/>
</dbReference>
<dbReference type="EMBL" id="AP003348">
    <property type="protein sequence ID" value="BAB86504.1"/>
    <property type="molecule type" value="Genomic_DNA"/>
</dbReference>
<dbReference type="EMBL" id="AP008207">
    <property type="protein sequence ID" value="BAF06570.1"/>
    <property type="molecule type" value="Genomic_DNA"/>
</dbReference>
<dbReference type="EMBL" id="AP014957">
    <property type="protein sequence ID" value="BAS74986.1"/>
    <property type="molecule type" value="Genomic_DNA"/>
</dbReference>
<dbReference type="EMBL" id="CM000138">
    <property type="protein sequence ID" value="EAZ13980.1"/>
    <property type="molecule type" value="Genomic_DNA"/>
</dbReference>
<dbReference type="PIR" id="T03298">
    <property type="entry name" value="T03298"/>
</dbReference>
<dbReference type="RefSeq" id="XP_015625064.1">
    <property type="nucleotide sequence ID" value="XM_015769578.1"/>
</dbReference>
<dbReference type="SMR" id="Q40636"/>
<dbReference type="FunCoup" id="Q40636">
    <property type="interactions" value="5"/>
</dbReference>
<dbReference type="STRING" id="39947.Q40636"/>
<dbReference type="PaxDb" id="39947-Q40636"/>
<dbReference type="EnsemblPlants" id="Os01t0823100-01">
    <property type="protein sequence ID" value="Os01t0823100-01"/>
    <property type="gene ID" value="Os01g0823100"/>
</dbReference>
<dbReference type="Gramene" id="Os01t0823100-01">
    <property type="protein sequence ID" value="Os01t0823100-01"/>
    <property type="gene ID" value="Os01g0823100"/>
</dbReference>
<dbReference type="KEGG" id="dosa:Os01g0823100"/>
<dbReference type="eggNOG" id="ENOG502QUZN">
    <property type="taxonomic scope" value="Eukaryota"/>
</dbReference>
<dbReference type="HOGENOM" id="CLU_027462_0_1_1"/>
<dbReference type="InParanoid" id="Q40636"/>
<dbReference type="OMA" id="ELTCNNA"/>
<dbReference type="OrthoDB" id="5823761at2759"/>
<dbReference type="Proteomes" id="UP000000763">
    <property type="component" value="Chromosome 1"/>
</dbReference>
<dbReference type="Proteomes" id="UP000007752">
    <property type="component" value="Chromosome 1"/>
</dbReference>
<dbReference type="Proteomes" id="UP000059680">
    <property type="component" value="Chromosome 1"/>
</dbReference>
<dbReference type="GO" id="GO:0005576">
    <property type="term" value="C:extracellular region"/>
    <property type="evidence" value="ECO:0007669"/>
    <property type="project" value="UniProtKB-KW"/>
</dbReference>
<dbReference type="GO" id="GO:0016020">
    <property type="term" value="C:membrane"/>
    <property type="evidence" value="ECO:0007669"/>
    <property type="project" value="UniProtKB-SubCell"/>
</dbReference>
<dbReference type="GO" id="GO:0009828">
    <property type="term" value="P:plant-type cell wall loosening"/>
    <property type="evidence" value="ECO:0000250"/>
    <property type="project" value="UniProtKB"/>
</dbReference>
<dbReference type="CDD" id="cd22274">
    <property type="entry name" value="DPBB_EXPA_N"/>
    <property type="match status" value="1"/>
</dbReference>
<dbReference type="FunFam" id="2.40.40.10:FF:000001">
    <property type="entry name" value="Expansin"/>
    <property type="match status" value="1"/>
</dbReference>
<dbReference type="FunFam" id="2.60.40.760:FF:000001">
    <property type="entry name" value="Expansin"/>
    <property type="match status" value="1"/>
</dbReference>
<dbReference type="Gene3D" id="2.60.40.760">
    <property type="entry name" value="Expansin, cellulose-binding-like domain"/>
    <property type="match status" value="1"/>
</dbReference>
<dbReference type="Gene3D" id="2.40.40.10">
    <property type="entry name" value="RlpA-like domain"/>
    <property type="match status" value="1"/>
</dbReference>
<dbReference type="InterPro" id="IPR007118">
    <property type="entry name" value="Expan_Lol_pI"/>
</dbReference>
<dbReference type="InterPro" id="IPR002963">
    <property type="entry name" value="Expansin"/>
</dbReference>
<dbReference type="InterPro" id="IPR007112">
    <property type="entry name" value="Expansin/allergen_DPBB_dom"/>
</dbReference>
<dbReference type="InterPro" id="IPR007117">
    <property type="entry name" value="Expansin_CBD"/>
</dbReference>
<dbReference type="InterPro" id="IPR036749">
    <property type="entry name" value="Expansin_CBD_sf"/>
</dbReference>
<dbReference type="InterPro" id="IPR009009">
    <property type="entry name" value="RlpA-like_DPBB"/>
</dbReference>
<dbReference type="InterPro" id="IPR036908">
    <property type="entry name" value="RlpA-like_sf"/>
</dbReference>
<dbReference type="PANTHER" id="PTHR31867">
    <property type="entry name" value="EXPANSIN-A15"/>
    <property type="match status" value="1"/>
</dbReference>
<dbReference type="Pfam" id="PF03330">
    <property type="entry name" value="DPBB_1"/>
    <property type="match status" value="1"/>
</dbReference>
<dbReference type="Pfam" id="PF01357">
    <property type="entry name" value="Expansin_C"/>
    <property type="match status" value="1"/>
</dbReference>
<dbReference type="PRINTS" id="PR01226">
    <property type="entry name" value="EXPANSIN"/>
</dbReference>
<dbReference type="PRINTS" id="PR01225">
    <property type="entry name" value="EXPANSNFAMLY"/>
</dbReference>
<dbReference type="SMART" id="SM00837">
    <property type="entry name" value="DPBB_1"/>
    <property type="match status" value="1"/>
</dbReference>
<dbReference type="SUPFAM" id="SSF50685">
    <property type="entry name" value="Barwin-like endoglucanases"/>
    <property type="match status" value="1"/>
</dbReference>
<dbReference type="SUPFAM" id="SSF49590">
    <property type="entry name" value="PHL pollen allergen"/>
    <property type="match status" value="1"/>
</dbReference>
<dbReference type="PROSITE" id="PS50843">
    <property type="entry name" value="EXPANSIN_CBD"/>
    <property type="match status" value="1"/>
</dbReference>
<dbReference type="PROSITE" id="PS50842">
    <property type="entry name" value="EXPANSIN_EG45"/>
    <property type="match status" value="1"/>
</dbReference>
<sequence length="251" mass="26674">MASRSSALLLLFSAFCFLARRAAADYGSWQSAHATFYGGGDASGTMGGACGYGNLYSTGYGTNTAALSTVLFNDGAACGSCYELRCDNDGQWCLPGSVTVTATNLCPPNYALPNDDGGWCNPPRPHFDMAEPAFLQIGVYRAGIVPVSYRRVPCVKKGGIRFTINGHSYFNLVLVTNVAGPGDVQSVSIKGSSTGWQPMSRNWGQNWQSNSYLDGQSLSFQVAVSDGRTVTSNNVVPAGWQFGQTFEGGQF</sequence>
<name>EXPA2_ORYSJ</name>
<keyword id="KW-0134">Cell wall</keyword>
<keyword id="KW-0961">Cell wall biogenesis/degradation</keyword>
<keyword id="KW-1015">Disulfide bond</keyword>
<keyword id="KW-0472">Membrane</keyword>
<keyword id="KW-1185">Reference proteome</keyword>
<keyword id="KW-0964">Secreted</keyword>
<keyword id="KW-0732">Signal</keyword>
<gene>
    <name type="primary">EXPA2</name>
    <name type="synonym">EXP2</name>
    <name type="ordered locus">Os01g0823100</name>
    <name type="ordered locus">LOC_Os01g60770</name>
    <name evidence="11" type="ORF">OsJ_03905</name>
    <name type="ORF">P0031D02.10</name>
    <name type="ORF">P0485B12.42</name>
</gene>
<comment type="function">
    <text evidence="1">May cause loosening and extension of plant cell walls by disrupting non-covalent bonding between cellulose microfibrils and matrix glucans. No enzymatic activity has been found. May be required for rapid internodal elongation in deepwater rice during submergence (By similarity).</text>
</comment>
<comment type="subcellular location">
    <subcellularLocation>
        <location evidence="1">Secreted</location>
        <location evidence="1">Cell wall</location>
    </subcellularLocation>
    <subcellularLocation>
        <location evidence="1">Membrane</location>
        <topology evidence="1">Peripheral membrane protein</topology>
    </subcellularLocation>
</comment>
<comment type="tissue specificity">
    <text evidence="7 8 9">Expressed in lateral root primordia, adventitious root primordia, coleoptiles, shoot apex, leaf primordia, panicles and flowers.</text>
</comment>
<comment type="developmental stage">
    <text evidence="5 6 8">Expressed in the apical region (growing zone) of the root hair. Expressed in the growing region of leaves. Expressed in developing seeds.</text>
</comment>
<comment type="induction">
    <text evidence="5 6 8">By gibberellin (GA3), submergence and wounding.</text>
</comment>
<comment type="similarity">
    <text evidence="10">Belongs to the expansin family. Expansin A subfamily.</text>
</comment>
<comment type="online information" name="EXPANSIN homepage">
    <link uri="https://www.dept.psu.edu/biology/groups/expansins/index.htm"/>
</comment>
<protein>
    <recommendedName>
        <fullName>Expansin-A2</fullName>
    </recommendedName>
    <alternativeName>
        <fullName>Alpha-expansin-2</fullName>
    </alternativeName>
    <alternativeName>
        <fullName>OsEXP2</fullName>
    </alternativeName>
    <alternativeName>
        <fullName>OsEXPA2</fullName>
    </alternativeName>
    <alternativeName>
        <fullName>OsaEXPa1.23</fullName>
    </alternativeName>
    <alternativeName>
        <fullName>RiExB</fullName>
    </alternativeName>
    <alternativeName>
        <fullName>RiExC</fullName>
    </alternativeName>
</protein>
<accession>Q40636</accession>
<accession>A2ZZ33</accession>
<accession>Q7F5X8</accession>
<accession>Q946J1</accession>